<dbReference type="EMBL" id="CP000744">
    <property type="protein sequence ID" value="ABR81120.1"/>
    <property type="molecule type" value="Genomic_DNA"/>
</dbReference>
<dbReference type="RefSeq" id="WP_003152354.1">
    <property type="nucleotide sequence ID" value="NC_009656.1"/>
</dbReference>
<dbReference type="SMR" id="A6V1G8"/>
<dbReference type="GeneID" id="77219899"/>
<dbReference type="KEGG" id="pap:PSPA7_1519"/>
<dbReference type="HOGENOM" id="CLU_002472_4_0_6"/>
<dbReference type="Proteomes" id="UP000001582">
    <property type="component" value="Chromosome"/>
</dbReference>
<dbReference type="GO" id="GO:0005829">
    <property type="term" value="C:cytosol"/>
    <property type="evidence" value="ECO:0007669"/>
    <property type="project" value="TreeGrafter"/>
</dbReference>
<dbReference type="GO" id="GO:0005524">
    <property type="term" value="F:ATP binding"/>
    <property type="evidence" value="ECO:0007669"/>
    <property type="project" value="UniProtKB-UniRule"/>
</dbReference>
<dbReference type="GO" id="GO:0140664">
    <property type="term" value="F:ATP-dependent DNA damage sensor activity"/>
    <property type="evidence" value="ECO:0007669"/>
    <property type="project" value="InterPro"/>
</dbReference>
<dbReference type="GO" id="GO:0003684">
    <property type="term" value="F:damaged DNA binding"/>
    <property type="evidence" value="ECO:0007669"/>
    <property type="project" value="UniProtKB-UniRule"/>
</dbReference>
<dbReference type="GO" id="GO:0030983">
    <property type="term" value="F:mismatched DNA binding"/>
    <property type="evidence" value="ECO:0007669"/>
    <property type="project" value="InterPro"/>
</dbReference>
<dbReference type="GO" id="GO:0006298">
    <property type="term" value="P:mismatch repair"/>
    <property type="evidence" value="ECO:0007669"/>
    <property type="project" value="UniProtKB-UniRule"/>
</dbReference>
<dbReference type="CDD" id="cd03284">
    <property type="entry name" value="ABC_MutS1"/>
    <property type="match status" value="1"/>
</dbReference>
<dbReference type="FunFam" id="1.10.1420.10:FF:000002">
    <property type="entry name" value="DNA mismatch repair protein MutS"/>
    <property type="match status" value="1"/>
</dbReference>
<dbReference type="FunFam" id="3.30.420.110:FF:000001">
    <property type="entry name" value="DNA mismatch repair protein MutS"/>
    <property type="match status" value="1"/>
</dbReference>
<dbReference type="FunFam" id="3.40.1170.10:FF:000001">
    <property type="entry name" value="DNA mismatch repair protein MutS"/>
    <property type="match status" value="1"/>
</dbReference>
<dbReference type="FunFam" id="3.40.50.300:FF:000283">
    <property type="entry name" value="DNA mismatch repair protein MutS"/>
    <property type="match status" value="1"/>
</dbReference>
<dbReference type="Gene3D" id="1.10.1420.10">
    <property type="match status" value="2"/>
</dbReference>
<dbReference type="Gene3D" id="6.10.140.430">
    <property type="match status" value="1"/>
</dbReference>
<dbReference type="Gene3D" id="3.40.1170.10">
    <property type="entry name" value="DNA repair protein MutS, domain I"/>
    <property type="match status" value="1"/>
</dbReference>
<dbReference type="Gene3D" id="3.30.420.110">
    <property type="entry name" value="MutS, connector domain"/>
    <property type="match status" value="1"/>
</dbReference>
<dbReference type="Gene3D" id="3.40.50.300">
    <property type="entry name" value="P-loop containing nucleotide triphosphate hydrolases"/>
    <property type="match status" value="1"/>
</dbReference>
<dbReference type="HAMAP" id="MF_00096">
    <property type="entry name" value="MutS"/>
    <property type="match status" value="1"/>
</dbReference>
<dbReference type="InterPro" id="IPR005748">
    <property type="entry name" value="DNA_mismatch_repair_MutS"/>
</dbReference>
<dbReference type="InterPro" id="IPR007695">
    <property type="entry name" value="DNA_mismatch_repair_MutS-lik_N"/>
</dbReference>
<dbReference type="InterPro" id="IPR017261">
    <property type="entry name" value="DNA_mismatch_repair_MutS/MSH"/>
</dbReference>
<dbReference type="InterPro" id="IPR000432">
    <property type="entry name" value="DNA_mismatch_repair_MutS_C"/>
</dbReference>
<dbReference type="InterPro" id="IPR007861">
    <property type="entry name" value="DNA_mismatch_repair_MutS_clamp"/>
</dbReference>
<dbReference type="InterPro" id="IPR007696">
    <property type="entry name" value="DNA_mismatch_repair_MutS_core"/>
</dbReference>
<dbReference type="InterPro" id="IPR016151">
    <property type="entry name" value="DNA_mismatch_repair_MutS_N"/>
</dbReference>
<dbReference type="InterPro" id="IPR036187">
    <property type="entry name" value="DNA_mismatch_repair_MutS_sf"/>
</dbReference>
<dbReference type="InterPro" id="IPR007860">
    <property type="entry name" value="DNA_mmatch_repair_MutS_con_dom"/>
</dbReference>
<dbReference type="InterPro" id="IPR045076">
    <property type="entry name" value="MutS"/>
</dbReference>
<dbReference type="InterPro" id="IPR036678">
    <property type="entry name" value="MutS_con_dom_sf"/>
</dbReference>
<dbReference type="InterPro" id="IPR027417">
    <property type="entry name" value="P-loop_NTPase"/>
</dbReference>
<dbReference type="NCBIfam" id="TIGR01070">
    <property type="entry name" value="mutS1"/>
    <property type="match status" value="1"/>
</dbReference>
<dbReference type="NCBIfam" id="NF003810">
    <property type="entry name" value="PRK05399.1"/>
    <property type="match status" value="1"/>
</dbReference>
<dbReference type="PANTHER" id="PTHR11361:SF34">
    <property type="entry name" value="DNA MISMATCH REPAIR PROTEIN MSH1, MITOCHONDRIAL"/>
    <property type="match status" value="1"/>
</dbReference>
<dbReference type="PANTHER" id="PTHR11361">
    <property type="entry name" value="DNA MISMATCH REPAIR PROTEIN MUTS FAMILY MEMBER"/>
    <property type="match status" value="1"/>
</dbReference>
<dbReference type="Pfam" id="PF01624">
    <property type="entry name" value="MutS_I"/>
    <property type="match status" value="1"/>
</dbReference>
<dbReference type="Pfam" id="PF05188">
    <property type="entry name" value="MutS_II"/>
    <property type="match status" value="1"/>
</dbReference>
<dbReference type="Pfam" id="PF05192">
    <property type="entry name" value="MutS_III"/>
    <property type="match status" value="1"/>
</dbReference>
<dbReference type="Pfam" id="PF05190">
    <property type="entry name" value="MutS_IV"/>
    <property type="match status" value="1"/>
</dbReference>
<dbReference type="Pfam" id="PF00488">
    <property type="entry name" value="MutS_V"/>
    <property type="match status" value="1"/>
</dbReference>
<dbReference type="PIRSF" id="PIRSF037677">
    <property type="entry name" value="DNA_mis_repair_Msh6"/>
    <property type="match status" value="1"/>
</dbReference>
<dbReference type="SMART" id="SM00534">
    <property type="entry name" value="MUTSac"/>
    <property type="match status" value="1"/>
</dbReference>
<dbReference type="SMART" id="SM00533">
    <property type="entry name" value="MUTSd"/>
    <property type="match status" value="1"/>
</dbReference>
<dbReference type="SUPFAM" id="SSF55271">
    <property type="entry name" value="DNA repair protein MutS, domain I"/>
    <property type="match status" value="1"/>
</dbReference>
<dbReference type="SUPFAM" id="SSF53150">
    <property type="entry name" value="DNA repair protein MutS, domain II"/>
    <property type="match status" value="1"/>
</dbReference>
<dbReference type="SUPFAM" id="SSF48334">
    <property type="entry name" value="DNA repair protein MutS, domain III"/>
    <property type="match status" value="1"/>
</dbReference>
<dbReference type="SUPFAM" id="SSF52540">
    <property type="entry name" value="P-loop containing nucleoside triphosphate hydrolases"/>
    <property type="match status" value="1"/>
</dbReference>
<dbReference type="PROSITE" id="PS00486">
    <property type="entry name" value="DNA_MISMATCH_REPAIR_2"/>
    <property type="match status" value="1"/>
</dbReference>
<proteinExistence type="inferred from homology"/>
<gene>
    <name evidence="1" type="primary">mutS</name>
    <name type="ordered locus">PSPA7_1519</name>
</gene>
<feature type="chain" id="PRO_1000008079" description="DNA mismatch repair protein MutS">
    <location>
        <begin position="1"/>
        <end position="855"/>
    </location>
</feature>
<feature type="region of interest" description="Disordered" evidence="2">
    <location>
        <begin position="795"/>
        <end position="816"/>
    </location>
</feature>
<feature type="compositionally biased region" description="Polar residues" evidence="2">
    <location>
        <begin position="796"/>
        <end position="816"/>
    </location>
</feature>
<feature type="binding site" evidence="1">
    <location>
        <begin position="613"/>
        <end position="620"/>
    </location>
    <ligand>
        <name>ATP</name>
        <dbReference type="ChEBI" id="CHEBI:30616"/>
    </ligand>
</feature>
<organism>
    <name type="scientific">Pseudomonas paraeruginosa (strain DSM 24068 / PA7)</name>
    <name type="common">Pseudomonas aeruginosa (strain PA7)</name>
    <dbReference type="NCBI Taxonomy" id="381754"/>
    <lineage>
        <taxon>Bacteria</taxon>
        <taxon>Pseudomonadati</taxon>
        <taxon>Pseudomonadota</taxon>
        <taxon>Gammaproteobacteria</taxon>
        <taxon>Pseudomonadales</taxon>
        <taxon>Pseudomonadaceae</taxon>
        <taxon>Pseudomonas</taxon>
        <taxon>Pseudomonas paraeruginosa</taxon>
    </lineage>
</organism>
<evidence type="ECO:0000255" key="1">
    <source>
        <dbReference type="HAMAP-Rule" id="MF_00096"/>
    </source>
</evidence>
<evidence type="ECO:0000256" key="2">
    <source>
        <dbReference type="SAM" id="MobiDB-lite"/>
    </source>
</evidence>
<sequence>MTDLSQHTPMMQQYFKLKHQHPDQLMFYRMGDFYELFYEDAKKAAKLLDITLTARGQSGGKAIPMAGIPFHSAEGYLAKLVKLGESVAICEQIGDPATSKGPVERQVVRIITPGTVSDEALLDERRDNLLAAILGDERLFGLAVLDITSGRFSVQEIKGWETLLAELERLNPAELLIPDDWPQGLPAEKRRGVRRRAPWDFDRDSAHKSLCQQFGTQDLKGFGCQNLTLAIGAAGCLLAYAKETQRTALPHLRSLRHDRLDDTVILDGASRRNLELDINLSGGRENTLQSVVDRCQTAMASRLMSRWLNRPLRDRAVLEARQESIACLLERYRFENLQPQLKEIGDLERILARIGLRNARPRDLARLRDALAALPDLQNAMTELEAPHLQALATTIGTYPELAELLAKAIIDNPPAVIRDGGVIKTGYDAELDELQALSENAGQFLMDLEAREKARTGLPNLKVGYNRIHGYFIELPRVQAEQAPADYIRRQTLKGAERFITPELKAFEDKALSAQSRALAREKALYEELLERLIGHLAPLQDSASALAELDVLANLAERALNLDLNRPRFVEHTCLHIEQGRHPVVEQVLETPFVANDLALDADTRMLVITGPNMGGKSTYMRQTALIVLLAHIGSFVPAARCELSLVDRIFTRIGSSDDLAGGRSTFMVEMSETANILHNATDKSLVLMDEVGRGTSTFDGLSLAWAAAEDLARTRAFTLFATHYFELTVLPESQPAVANVHLNATEHNERIVFLHHVLPGPASQSYGLAVAQLAGVPSPVIQRAREHLKRLETTSLPHEVPSQQSGKPASPMQSDLFASLPHPVIDELSRINPDDISPRQALDLLYAWKMRV</sequence>
<protein>
    <recommendedName>
        <fullName evidence="1">DNA mismatch repair protein MutS</fullName>
    </recommendedName>
</protein>
<name>MUTS_PSEP7</name>
<comment type="function">
    <text evidence="1">This protein is involved in the repair of mismatches in DNA. It is possible that it carries out the mismatch recognition step. This protein has a weak ATPase activity.</text>
</comment>
<comment type="similarity">
    <text evidence="1">Belongs to the DNA mismatch repair MutS family.</text>
</comment>
<keyword id="KW-0067">ATP-binding</keyword>
<keyword id="KW-0227">DNA damage</keyword>
<keyword id="KW-0234">DNA repair</keyword>
<keyword id="KW-0238">DNA-binding</keyword>
<keyword id="KW-0547">Nucleotide-binding</keyword>
<accession>A6V1G8</accession>
<reference key="1">
    <citation type="submission" date="2007-06" db="EMBL/GenBank/DDBJ databases">
        <authorList>
            <person name="Dodson R.J."/>
            <person name="Harkins D."/>
            <person name="Paulsen I.T."/>
        </authorList>
    </citation>
    <scope>NUCLEOTIDE SEQUENCE [LARGE SCALE GENOMIC DNA]</scope>
    <source>
        <strain>DSM 24068 / PA7</strain>
    </source>
</reference>